<gene>
    <name type="ordered locus">SSO0046.1</name>
</gene>
<keyword id="KW-0903">Direct protein sequencing</keyword>
<keyword id="KW-0238">DNA-binding</keyword>
<keyword id="KW-1185">Reference proteome</keyword>
<accession>P81552</accession>
<protein>
    <recommendedName>
        <fullName>Repressor-like protein SSo7c4</fullName>
    </recommendedName>
</protein>
<dbReference type="EMBL" id="AE006641">
    <property type="status" value="NOT_ANNOTATED_CDS"/>
    <property type="molecule type" value="Genomic_DNA"/>
</dbReference>
<dbReference type="BMRB" id="P81552"/>
<dbReference type="SMR" id="P81552"/>
<dbReference type="InParanoid" id="P81552"/>
<dbReference type="PhylomeDB" id="P81552"/>
<dbReference type="Proteomes" id="UP000001974">
    <property type="component" value="Chromosome"/>
</dbReference>
<dbReference type="GO" id="GO:0003677">
    <property type="term" value="F:DNA binding"/>
    <property type="evidence" value="ECO:0007669"/>
    <property type="project" value="UniProtKB-KW"/>
</dbReference>
<dbReference type="Gene3D" id="2.10.260.10">
    <property type="match status" value="1"/>
</dbReference>
<dbReference type="InterPro" id="IPR052975">
    <property type="entry name" value="Repressor-like_regulatory"/>
</dbReference>
<dbReference type="InterPro" id="IPR007159">
    <property type="entry name" value="SpoVT-AbrB_dom"/>
</dbReference>
<dbReference type="InterPro" id="IPR037914">
    <property type="entry name" value="SpoVT-AbrB_sf"/>
</dbReference>
<dbReference type="NCBIfam" id="TIGR01439">
    <property type="entry name" value="lp_hng_hel_AbrB"/>
    <property type="match status" value="1"/>
</dbReference>
<dbReference type="PANTHER" id="PTHR34860">
    <property type="entry name" value="REPRESSOR-LIKE PROTEIN SSO7C3"/>
    <property type="match status" value="1"/>
</dbReference>
<dbReference type="PANTHER" id="PTHR34860:SF6">
    <property type="entry name" value="REPRESSOR-LIKE PROTEIN SSO7C3"/>
    <property type="match status" value="1"/>
</dbReference>
<dbReference type="Pfam" id="PF04014">
    <property type="entry name" value="MazE_antitoxin"/>
    <property type="match status" value="1"/>
</dbReference>
<dbReference type="SMART" id="SM00966">
    <property type="entry name" value="SpoVT_AbrB"/>
    <property type="match status" value="1"/>
</dbReference>
<dbReference type="SUPFAM" id="SSF89447">
    <property type="entry name" value="AbrB/MazE/MraZ-like"/>
    <property type="match status" value="1"/>
</dbReference>
<dbReference type="PROSITE" id="PS51740">
    <property type="entry name" value="SPOVT_ABRB"/>
    <property type="match status" value="1"/>
</dbReference>
<proteinExistence type="evidence at protein level"/>
<evidence type="ECO:0000255" key="1">
    <source>
        <dbReference type="PROSITE-ProRule" id="PRU01076"/>
    </source>
</evidence>
<evidence type="ECO:0000269" key="2">
    <source>
    </source>
</evidence>
<evidence type="ECO:0000305" key="3"/>
<feature type="initiator methionine" description="Removed" evidence="2">
    <location>
        <position position="1"/>
    </location>
</feature>
<feature type="chain" id="PRO_0000097560" description="Repressor-like protein SSo7c4">
    <location>
        <begin position="2"/>
        <end position="56"/>
    </location>
</feature>
<feature type="domain" description="SpoVT-AbrB" evidence="1">
    <location>
        <begin position="4"/>
        <end position="51"/>
    </location>
</feature>
<feature type="sequence conflict" description="In Ref. 2; AA sequence." evidence="3" ref="2">
    <original>G</original>
    <variation>E</variation>
    <location>
        <position position="41"/>
    </location>
</feature>
<feature type="sequence conflict" description="In Ref. 1." evidence="3" ref="1">
    <original>DSKTDAH</original>
    <variation>KEPWK</variation>
    <location>
        <begin position="50"/>
        <end position="56"/>
    </location>
</feature>
<organism>
    <name type="scientific">Saccharolobus solfataricus (strain ATCC 35092 / DSM 1617 / JCM 11322 / P2)</name>
    <name type="common">Sulfolobus solfataricus</name>
    <dbReference type="NCBI Taxonomy" id="273057"/>
    <lineage>
        <taxon>Archaea</taxon>
        <taxon>Thermoproteota</taxon>
        <taxon>Thermoprotei</taxon>
        <taxon>Sulfolobales</taxon>
        <taxon>Sulfolobaceae</taxon>
        <taxon>Saccharolobus</taxon>
    </lineage>
</organism>
<name>S7C4_SACS2</name>
<sequence length="56" mass="6287">MAVEEIVKVSRNYQVTIPAKVRQKFQIKEGDLVKVTFDESGGVVKIQLLDSKTDAH</sequence>
<reference key="1">
    <citation type="journal article" date="2001" name="Proc. Natl. Acad. Sci. U.S.A.">
        <title>The complete genome of the crenarchaeon Sulfolobus solfataricus P2.</title>
        <authorList>
            <person name="She Q."/>
            <person name="Singh R.K."/>
            <person name="Confalonieri F."/>
            <person name="Zivanovic Y."/>
            <person name="Allard G."/>
            <person name="Awayez M.J."/>
            <person name="Chan-Weiher C.C.-Y."/>
            <person name="Clausen I.G."/>
            <person name="Curtis B.A."/>
            <person name="De Moors A."/>
            <person name="Erauso G."/>
            <person name="Fletcher C."/>
            <person name="Gordon P.M.K."/>
            <person name="Heikamp-de Jong I."/>
            <person name="Jeffries A.C."/>
            <person name="Kozera C.J."/>
            <person name="Medina N."/>
            <person name="Peng X."/>
            <person name="Thi-Ngoc H.P."/>
            <person name="Redder P."/>
            <person name="Schenk M.E."/>
            <person name="Theriault C."/>
            <person name="Tolstrup N."/>
            <person name="Charlebois R.L."/>
            <person name="Doolittle W.F."/>
            <person name="Duguet M."/>
            <person name="Gaasterland T."/>
            <person name="Garrett R.A."/>
            <person name="Ragan M.A."/>
            <person name="Sensen C.W."/>
            <person name="Van der Oost J."/>
        </authorList>
    </citation>
    <scope>NUCLEOTIDE SEQUENCE [LARGE SCALE GENOMIC DNA]</scope>
    <source>
        <strain>ATCC 35092 / DSM 1617 / JCM 11322 / P2</strain>
    </source>
</reference>
<reference key="2">
    <citation type="journal article" date="1998" name="FEBS Lett.">
        <title>Isolation and structure of repressor-like proteins from the archaeon Sulfolobus solfataricus.</title>
        <authorList>
            <person name="Oppermann U.C.T."/>
            <person name="Knapp S."/>
            <person name="Bonetto V."/>
            <person name="Ladenstein R."/>
            <person name="Joernvall H."/>
        </authorList>
    </citation>
    <scope>PROTEIN SEQUENCE OF 2-56</scope>
    <scope>IDENTIFICATION BY MASS SPECTROMETRY</scope>
    <source>
        <strain>ATCC 35092 / DSM 1617 / JCM 11322 / P2</strain>
    </source>
</reference>